<protein>
    <recommendedName>
        <fullName evidence="1">Large ribosomal subunit protein uL23</fullName>
    </recommendedName>
    <alternativeName>
        <fullName evidence="2">50S ribosomal protein L23</fullName>
    </alternativeName>
</protein>
<reference key="1">
    <citation type="journal article" date="2009" name="PLoS ONE">
        <title>Genome sequence of the pathogenic intestinal spirochete Brachyspira hyodysenteriae reveals adaptations to its lifestyle in the porcine large intestine.</title>
        <authorList>
            <person name="Bellgard M.I."/>
            <person name="Wanchanthuek P."/>
            <person name="La T."/>
            <person name="Ryan K."/>
            <person name="Moolhuijzen P."/>
            <person name="Albertyn Z."/>
            <person name="Shaban B."/>
            <person name="Motro Y."/>
            <person name="Dunn D.S."/>
            <person name="Schibeci D."/>
            <person name="Hunter A."/>
            <person name="Barrero R."/>
            <person name="Phillips N.D."/>
            <person name="Hampson D.J."/>
        </authorList>
    </citation>
    <scope>NUCLEOTIDE SEQUENCE [LARGE SCALE GENOMIC DNA]</scope>
    <source>
        <strain>ATCC 49526 / WA1</strain>
    </source>
</reference>
<feature type="chain" id="PRO_1000215025" description="Large ribosomal subunit protein uL23">
    <location>
        <begin position="1"/>
        <end position="97"/>
    </location>
</feature>
<organism>
    <name type="scientific">Brachyspira hyodysenteriae (strain ATCC 49526 / WA1)</name>
    <dbReference type="NCBI Taxonomy" id="565034"/>
    <lineage>
        <taxon>Bacteria</taxon>
        <taxon>Pseudomonadati</taxon>
        <taxon>Spirochaetota</taxon>
        <taxon>Spirochaetia</taxon>
        <taxon>Brachyspirales</taxon>
        <taxon>Brachyspiraceae</taxon>
        <taxon>Brachyspira</taxon>
    </lineage>
</organism>
<proteinExistence type="inferred from homology"/>
<name>RL23_BRAHW</name>
<keyword id="KW-0687">Ribonucleoprotein</keyword>
<keyword id="KW-0689">Ribosomal protein</keyword>
<keyword id="KW-0694">RNA-binding</keyword>
<keyword id="KW-0699">rRNA-binding</keyword>
<evidence type="ECO:0000255" key="1">
    <source>
        <dbReference type="HAMAP-Rule" id="MF_01369"/>
    </source>
</evidence>
<evidence type="ECO:0000305" key="2"/>
<dbReference type="EMBL" id="CP001357">
    <property type="protein sequence ID" value="ACN84584.1"/>
    <property type="molecule type" value="Genomic_DNA"/>
</dbReference>
<dbReference type="SMR" id="C0QVZ8"/>
<dbReference type="STRING" id="565034.BHWA1_02126"/>
<dbReference type="KEGG" id="bhy:BHWA1_02126"/>
<dbReference type="eggNOG" id="COG0089">
    <property type="taxonomic scope" value="Bacteria"/>
</dbReference>
<dbReference type="HOGENOM" id="CLU_037562_3_1_12"/>
<dbReference type="Proteomes" id="UP000001803">
    <property type="component" value="Chromosome"/>
</dbReference>
<dbReference type="GO" id="GO:1990904">
    <property type="term" value="C:ribonucleoprotein complex"/>
    <property type="evidence" value="ECO:0007669"/>
    <property type="project" value="UniProtKB-KW"/>
</dbReference>
<dbReference type="GO" id="GO:0005840">
    <property type="term" value="C:ribosome"/>
    <property type="evidence" value="ECO:0007669"/>
    <property type="project" value="UniProtKB-KW"/>
</dbReference>
<dbReference type="GO" id="GO:0019843">
    <property type="term" value="F:rRNA binding"/>
    <property type="evidence" value="ECO:0007669"/>
    <property type="project" value="UniProtKB-UniRule"/>
</dbReference>
<dbReference type="GO" id="GO:0003735">
    <property type="term" value="F:structural constituent of ribosome"/>
    <property type="evidence" value="ECO:0007669"/>
    <property type="project" value="InterPro"/>
</dbReference>
<dbReference type="GO" id="GO:0006412">
    <property type="term" value="P:translation"/>
    <property type="evidence" value="ECO:0007669"/>
    <property type="project" value="UniProtKB-UniRule"/>
</dbReference>
<dbReference type="Gene3D" id="3.30.70.330">
    <property type="match status" value="1"/>
</dbReference>
<dbReference type="HAMAP" id="MF_01369_B">
    <property type="entry name" value="Ribosomal_uL23_B"/>
    <property type="match status" value="1"/>
</dbReference>
<dbReference type="InterPro" id="IPR012677">
    <property type="entry name" value="Nucleotide-bd_a/b_plait_sf"/>
</dbReference>
<dbReference type="InterPro" id="IPR013025">
    <property type="entry name" value="Ribosomal_uL23-like"/>
</dbReference>
<dbReference type="InterPro" id="IPR012678">
    <property type="entry name" value="Ribosomal_uL23/eL15/eS24_sf"/>
</dbReference>
<dbReference type="NCBIfam" id="NF004363">
    <property type="entry name" value="PRK05738.2-4"/>
    <property type="match status" value="1"/>
</dbReference>
<dbReference type="Pfam" id="PF00276">
    <property type="entry name" value="Ribosomal_L23"/>
    <property type="match status" value="1"/>
</dbReference>
<dbReference type="SUPFAM" id="SSF54189">
    <property type="entry name" value="Ribosomal proteins S24e, L23 and L15e"/>
    <property type="match status" value="1"/>
</dbReference>
<comment type="function">
    <text evidence="1">One of the early assembly proteins it binds 23S rRNA. One of the proteins that surrounds the polypeptide exit tunnel on the outside of the ribosome. Forms the main docking site for trigger factor binding to the ribosome.</text>
</comment>
<comment type="subunit">
    <text evidence="1">Part of the 50S ribosomal subunit. Contacts protein L29, and trigger factor when it is bound to the ribosome.</text>
</comment>
<comment type="similarity">
    <text evidence="1">Belongs to the universal ribosomal protein uL23 family.</text>
</comment>
<gene>
    <name evidence="1" type="primary">rplW</name>
    <name type="ordered locus">BHWA1_02126</name>
</gene>
<sequence length="97" mass="11500">MYSLLIEPILTEKSNMLRTEPRGTEKRYYVFKVRQDANKTELKKAVEKIFNVHPLDCKIINVKPKKKNRRMSRRGYTRSYKKAIIVLDGKESIDIVK</sequence>
<accession>C0QVZ8</accession>